<name>GPX1_HYLLA</name>
<organism>
    <name type="scientific">Hylobates lar</name>
    <name type="common">Lar gibbon</name>
    <name type="synonym">White-handed gibbon</name>
    <dbReference type="NCBI Taxonomy" id="9580"/>
    <lineage>
        <taxon>Eukaryota</taxon>
        <taxon>Metazoa</taxon>
        <taxon>Chordata</taxon>
        <taxon>Craniata</taxon>
        <taxon>Vertebrata</taxon>
        <taxon>Euteleostomi</taxon>
        <taxon>Mammalia</taxon>
        <taxon>Eutheria</taxon>
        <taxon>Euarchontoglires</taxon>
        <taxon>Primates</taxon>
        <taxon>Haplorrhini</taxon>
        <taxon>Catarrhini</taxon>
        <taxon>Hylobatidae</taxon>
        <taxon>Hylobates</taxon>
    </lineage>
</organism>
<proteinExistence type="evidence at transcript level"/>
<accession>Q4AEI2</accession>
<sequence>MCAARLAAAAAQSVYAFSARPLTGGEPVSLGSLRGKILLIENVASLUGTTVRDYTQMNELQRRLGPRGLVVLGFPCNQFGHQENAKNEEILNSLKYVRPGGGFEPNFMLFEKCEVNGAGAHPLFAFLREALPAPSDDATALMTDPKLITWSPVCRNDVAWNFEKFLVGPDGVPLRRYSRRFQTIDIEPDIEALLSQGPSCA</sequence>
<protein>
    <recommendedName>
        <fullName evidence="6">Glutathione peroxidase 1</fullName>
        <shortName>GPx-1</shortName>
        <shortName>GSHPx-1</shortName>
        <ecNumber evidence="4">1.11.1.9</ecNumber>
    </recommendedName>
    <alternativeName>
        <fullName>Cellular glutathione peroxidase</fullName>
    </alternativeName>
</protein>
<feature type="chain" id="PRO_0000066611" description="Glutathione peroxidase 1">
    <location>
        <begin position="1"/>
        <end position="201"/>
    </location>
</feature>
<feature type="active site" evidence="2">
    <location>
        <position position="47"/>
    </location>
</feature>
<feature type="site" description="Subject to oxidation and hydroselenide loss to dehydroalanine" evidence="1">
    <location>
        <position position="47"/>
    </location>
</feature>
<feature type="non-standard amino acid" description="Selenocysteine" evidence="5">
    <location>
        <position position="47"/>
    </location>
</feature>
<feature type="modified residue" description="Phosphoserine" evidence="3">
    <location>
        <position position="32"/>
    </location>
</feature>
<feature type="modified residue" description="N6-acetyllysine; alternate" evidence="5">
    <location>
        <position position="86"/>
    </location>
</feature>
<feature type="modified residue" description="N6-succinyllysine; alternate" evidence="5">
    <location>
        <position position="86"/>
    </location>
</feature>
<feature type="modified residue" description="N6-acetyllysine; alternate" evidence="5">
    <location>
        <position position="112"/>
    </location>
</feature>
<feature type="modified residue" description="N6-succinyllysine; alternate" evidence="5">
    <location>
        <position position="112"/>
    </location>
</feature>
<feature type="modified residue" description="N6-acetyllysine; alternate" evidence="5">
    <location>
        <position position="146"/>
    </location>
</feature>
<feature type="modified residue" description="N6-succinyllysine; alternate" evidence="5">
    <location>
        <position position="146"/>
    </location>
</feature>
<feature type="modified residue" description="Phosphoserine" evidence="3">
    <location>
        <position position="195"/>
    </location>
</feature>
<feature type="modified residue" description="Phosphoserine" evidence="4">
    <location>
        <position position="199"/>
    </location>
</feature>
<dbReference type="EC" id="1.11.1.9" evidence="4"/>
<dbReference type="EMBL" id="AB120998">
    <property type="protein sequence ID" value="BAE17008.1"/>
    <property type="molecule type" value="mRNA"/>
</dbReference>
<dbReference type="PeroxiBase" id="3696">
    <property type="entry name" value="HlGPx01"/>
</dbReference>
<dbReference type="GO" id="GO:0005829">
    <property type="term" value="C:cytosol"/>
    <property type="evidence" value="ECO:0007669"/>
    <property type="project" value="TreeGrafter"/>
</dbReference>
<dbReference type="GO" id="GO:0005739">
    <property type="term" value="C:mitochondrion"/>
    <property type="evidence" value="ECO:0007669"/>
    <property type="project" value="TreeGrafter"/>
</dbReference>
<dbReference type="GO" id="GO:0004602">
    <property type="term" value="F:glutathione peroxidase activity"/>
    <property type="evidence" value="ECO:0000250"/>
    <property type="project" value="UniProtKB"/>
</dbReference>
<dbReference type="GO" id="GO:0047066">
    <property type="term" value="F:phospholipid-hydroperoxide glutathione peroxidase activity"/>
    <property type="evidence" value="ECO:0000250"/>
    <property type="project" value="UniProtKB"/>
</dbReference>
<dbReference type="GO" id="GO:0019369">
    <property type="term" value="P:arachidonate metabolic process"/>
    <property type="evidence" value="ECO:0000250"/>
    <property type="project" value="UniProtKB"/>
</dbReference>
<dbReference type="GO" id="GO:0006749">
    <property type="term" value="P:glutathione metabolic process"/>
    <property type="evidence" value="ECO:0007669"/>
    <property type="project" value="TreeGrafter"/>
</dbReference>
<dbReference type="GO" id="GO:0042744">
    <property type="term" value="P:hydrogen peroxide catabolic process"/>
    <property type="evidence" value="ECO:0007669"/>
    <property type="project" value="TreeGrafter"/>
</dbReference>
<dbReference type="GO" id="GO:0019372">
    <property type="term" value="P:lipoxygenase pathway"/>
    <property type="evidence" value="ECO:0000250"/>
    <property type="project" value="UniProtKB"/>
</dbReference>
<dbReference type="GO" id="GO:0042542">
    <property type="term" value="P:response to hydrogen peroxide"/>
    <property type="evidence" value="ECO:0007669"/>
    <property type="project" value="TreeGrafter"/>
</dbReference>
<dbReference type="GO" id="GO:0010269">
    <property type="term" value="P:response to selenium ion"/>
    <property type="evidence" value="ECO:0007669"/>
    <property type="project" value="TreeGrafter"/>
</dbReference>
<dbReference type="CDD" id="cd00340">
    <property type="entry name" value="GSH_Peroxidase"/>
    <property type="match status" value="1"/>
</dbReference>
<dbReference type="FunFam" id="3.40.30.10:FF:000153">
    <property type="entry name" value="Glutathione peroxidase"/>
    <property type="match status" value="1"/>
</dbReference>
<dbReference type="Gene3D" id="3.40.30.10">
    <property type="entry name" value="Glutaredoxin"/>
    <property type="match status" value="1"/>
</dbReference>
<dbReference type="InterPro" id="IPR000889">
    <property type="entry name" value="Glutathione_peroxidase"/>
</dbReference>
<dbReference type="InterPro" id="IPR029759">
    <property type="entry name" value="GPX_AS"/>
</dbReference>
<dbReference type="InterPro" id="IPR029760">
    <property type="entry name" value="GPX_CS"/>
</dbReference>
<dbReference type="InterPro" id="IPR036249">
    <property type="entry name" value="Thioredoxin-like_sf"/>
</dbReference>
<dbReference type="PANTHER" id="PTHR11592">
    <property type="entry name" value="GLUTATHIONE PEROXIDASE"/>
    <property type="match status" value="1"/>
</dbReference>
<dbReference type="PANTHER" id="PTHR11592:SF41">
    <property type="entry name" value="GLUTATHIONE PEROXIDASE 1"/>
    <property type="match status" value="1"/>
</dbReference>
<dbReference type="Pfam" id="PF00255">
    <property type="entry name" value="GSHPx"/>
    <property type="match status" value="1"/>
</dbReference>
<dbReference type="PIRSF" id="PIRSF000303">
    <property type="entry name" value="Glutathion_perox"/>
    <property type="match status" value="1"/>
</dbReference>
<dbReference type="PRINTS" id="PR01011">
    <property type="entry name" value="GLUTPROXDASE"/>
</dbReference>
<dbReference type="SUPFAM" id="SSF52833">
    <property type="entry name" value="Thioredoxin-like"/>
    <property type="match status" value="1"/>
</dbReference>
<dbReference type="PROSITE" id="PS00460">
    <property type="entry name" value="GLUTATHIONE_PEROXID_1"/>
    <property type="match status" value="1"/>
</dbReference>
<dbReference type="PROSITE" id="PS00763">
    <property type="entry name" value="GLUTATHIONE_PEROXID_2"/>
    <property type="match status" value="1"/>
</dbReference>
<dbReference type="PROSITE" id="PS51355">
    <property type="entry name" value="GLUTATHIONE_PEROXID_3"/>
    <property type="match status" value="1"/>
</dbReference>
<gene>
    <name type="primary">GPX1</name>
</gene>
<keyword id="KW-0007">Acetylation</keyword>
<keyword id="KW-0963">Cytoplasm</keyword>
<keyword id="KW-0443">Lipid metabolism</keyword>
<keyword id="KW-0560">Oxidoreductase</keyword>
<keyword id="KW-0575">Peroxidase</keyword>
<keyword id="KW-0597">Phosphoprotein</keyword>
<keyword id="KW-0712">Selenocysteine</keyword>
<evidence type="ECO:0000250" key="1"/>
<evidence type="ECO:0000250" key="2">
    <source>
        <dbReference type="UniProtKB" id="O70325"/>
    </source>
</evidence>
<evidence type="ECO:0000250" key="3">
    <source>
        <dbReference type="UniProtKB" id="P04041"/>
    </source>
</evidence>
<evidence type="ECO:0000250" key="4">
    <source>
        <dbReference type="UniProtKB" id="P07203"/>
    </source>
</evidence>
<evidence type="ECO:0000250" key="5">
    <source>
        <dbReference type="UniProtKB" id="P11352"/>
    </source>
</evidence>
<evidence type="ECO:0000305" key="6"/>
<reference key="1">
    <citation type="journal article" date="2005" name="Comp. Biochem. Physiol.">
        <title>Structure, gene expression, and evolution of primate glutathione peroxidases.</title>
        <authorList>
            <person name="Fukuhara R."/>
            <person name="Kageyama T."/>
        </authorList>
    </citation>
    <scope>NUCLEOTIDE SEQUENCE [MRNA]</scope>
</reference>
<comment type="function">
    <text evidence="5">Protects the hemoglobin in erythrocytes from oxidative breakdown. In platelets, plays a crucial role of glutathione peroxidase in the arachidonic acid metabolism.</text>
</comment>
<comment type="catalytic activity">
    <reaction evidence="5">
        <text>2 glutathione + H2O2 = glutathione disulfide + 2 H2O</text>
        <dbReference type="Rhea" id="RHEA:16833"/>
        <dbReference type="ChEBI" id="CHEBI:15377"/>
        <dbReference type="ChEBI" id="CHEBI:16240"/>
        <dbReference type="ChEBI" id="CHEBI:57925"/>
        <dbReference type="ChEBI" id="CHEBI:58297"/>
        <dbReference type="EC" id="1.11.1.9"/>
    </reaction>
    <physiologicalReaction direction="left-to-right" evidence="5">
        <dbReference type="Rhea" id="RHEA:16834"/>
    </physiologicalReaction>
</comment>
<comment type="catalytic activity">
    <reaction evidence="5">
        <text>(12S)-hydroperoxy-(5Z,8Z,10E,14Z)-eicosatetraenoate + 2 glutathione = (12S)-hydroxy-(5Z,8Z,10E,14Z)-eicosatetraenoate + glutathione disulfide + H2O</text>
        <dbReference type="Rhea" id="RHEA:50708"/>
        <dbReference type="ChEBI" id="CHEBI:15377"/>
        <dbReference type="ChEBI" id="CHEBI:57444"/>
        <dbReference type="ChEBI" id="CHEBI:57925"/>
        <dbReference type="ChEBI" id="CHEBI:58297"/>
        <dbReference type="ChEBI" id="CHEBI:90680"/>
    </reaction>
    <physiologicalReaction direction="left-to-right" evidence="5">
        <dbReference type="Rhea" id="RHEA:50709"/>
    </physiologicalReaction>
</comment>
<comment type="subunit">
    <text evidence="5">Homotetramer. Interacts with MIEN1 (By similarity).</text>
</comment>
<comment type="subcellular location">
    <subcellularLocation>
        <location evidence="1">Cytoplasm</location>
    </subcellularLocation>
</comment>
<comment type="PTM">
    <text evidence="5">During periods of oxidative stress, Sec-47 may react with a superoxide radical, irreversibly lose hydroselenide and be converted to dehydroalanine.</text>
</comment>
<comment type="similarity">
    <text evidence="6">Belongs to the glutathione peroxidase family.</text>
</comment>